<accession>Q8FH28</accession>
<keyword id="KW-0067">ATP-binding</keyword>
<keyword id="KW-0997">Cell inner membrane</keyword>
<keyword id="KW-1003">Cell membrane</keyword>
<keyword id="KW-0472">Membrane</keyword>
<keyword id="KW-0547">Nucleotide-binding</keyword>
<keyword id="KW-1185">Reference proteome</keyword>
<keyword id="KW-1278">Translocase</keyword>
<keyword id="KW-0813">Transport</keyword>
<name>BTUD_ECOL6</name>
<comment type="function">
    <text evidence="1">Part of the ABC transporter complex BtuCDF involved in vitamin B12 import. Responsible for energy coupling to the transport system.</text>
</comment>
<comment type="catalytic activity">
    <reaction evidence="1">
        <text>an R-cob(III)alamin(out) + ATP + H2O = an R-cob(III)alamin(in) + ADP + phosphate + H(+)</text>
        <dbReference type="Rhea" id="RHEA:17873"/>
        <dbReference type="ChEBI" id="CHEBI:15377"/>
        <dbReference type="ChEBI" id="CHEBI:15378"/>
        <dbReference type="ChEBI" id="CHEBI:30616"/>
        <dbReference type="ChEBI" id="CHEBI:43474"/>
        <dbReference type="ChEBI" id="CHEBI:140785"/>
        <dbReference type="ChEBI" id="CHEBI:456216"/>
        <dbReference type="EC" id="7.6.2.8"/>
    </reaction>
</comment>
<comment type="subunit">
    <text evidence="1">The complex is composed of two ATP-binding proteins (BtuD), two transmembrane proteins (BtuC) and a solute-binding protein (BtuF).</text>
</comment>
<comment type="subcellular location">
    <subcellularLocation>
        <location evidence="1">Cell inner membrane</location>
        <topology evidence="1">Peripheral membrane protein</topology>
    </subcellularLocation>
</comment>
<comment type="similarity">
    <text evidence="1">Belongs to the ABC transporter superfamily. Vitamin B12 importer (TC 3.A.1.13.1) family.</text>
</comment>
<proteinExistence type="inferred from homology"/>
<gene>
    <name evidence="1" type="primary">btuD</name>
    <name type="ordered locus">c2105</name>
</gene>
<evidence type="ECO:0000255" key="1">
    <source>
        <dbReference type="HAMAP-Rule" id="MF_01005"/>
    </source>
</evidence>
<dbReference type="EC" id="7.6.2.8" evidence="1"/>
<dbReference type="EMBL" id="AE014075">
    <property type="protein sequence ID" value="AAN80565.1"/>
    <property type="molecule type" value="Genomic_DNA"/>
</dbReference>
<dbReference type="RefSeq" id="WP_000029464.1">
    <property type="nucleotide sequence ID" value="NZ_CP051263.1"/>
</dbReference>
<dbReference type="SMR" id="Q8FH28"/>
<dbReference type="STRING" id="199310.c2105"/>
<dbReference type="KEGG" id="ecc:c2105"/>
<dbReference type="eggNOG" id="COG4138">
    <property type="taxonomic scope" value="Bacteria"/>
</dbReference>
<dbReference type="HOGENOM" id="CLU_000604_1_11_6"/>
<dbReference type="BioCyc" id="ECOL199310:C2105-MONOMER"/>
<dbReference type="Proteomes" id="UP000001410">
    <property type="component" value="Chromosome"/>
</dbReference>
<dbReference type="GO" id="GO:0005886">
    <property type="term" value="C:plasma membrane"/>
    <property type="evidence" value="ECO:0007669"/>
    <property type="project" value="UniProtKB-SubCell"/>
</dbReference>
<dbReference type="GO" id="GO:0015420">
    <property type="term" value="F:ABC-type vitamin B12 transporter activity"/>
    <property type="evidence" value="ECO:0007669"/>
    <property type="project" value="UniProtKB-UniRule"/>
</dbReference>
<dbReference type="GO" id="GO:0005524">
    <property type="term" value="F:ATP binding"/>
    <property type="evidence" value="ECO:0007669"/>
    <property type="project" value="UniProtKB-KW"/>
</dbReference>
<dbReference type="GO" id="GO:0016887">
    <property type="term" value="F:ATP hydrolysis activity"/>
    <property type="evidence" value="ECO:0007669"/>
    <property type="project" value="InterPro"/>
</dbReference>
<dbReference type="CDD" id="cd03214">
    <property type="entry name" value="ABC_Iron-Siderophores_B12_Hemin"/>
    <property type="match status" value="1"/>
</dbReference>
<dbReference type="FunFam" id="3.40.50.300:FF:000462">
    <property type="entry name" value="Vitamin B12 import ATP-binding protein BtuD"/>
    <property type="match status" value="1"/>
</dbReference>
<dbReference type="Gene3D" id="3.40.50.300">
    <property type="entry name" value="P-loop containing nucleotide triphosphate hydrolases"/>
    <property type="match status" value="1"/>
</dbReference>
<dbReference type="HAMAP" id="MF_01005">
    <property type="entry name" value="BtuD"/>
    <property type="match status" value="1"/>
</dbReference>
<dbReference type="InterPro" id="IPR003593">
    <property type="entry name" value="AAA+_ATPase"/>
</dbReference>
<dbReference type="InterPro" id="IPR003439">
    <property type="entry name" value="ABC_transporter-like_ATP-bd"/>
</dbReference>
<dbReference type="InterPro" id="IPR017871">
    <property type="entry name" value="ABC_transporter-like_CS"/>
</dbReference>
<dbReference type="InterPro" id="IPR023693">
    <property type="entry name" value="ABC_transptr_BtuD"/>
</dbReference>
<dbReference type="InterPro" id="IPR050153">
    <property type="entry name" value="Metal_Ion_Import_ABC"/>
</dbReference>
<dbReference type="InterPro" id="IPR027417">
    <property type="entry name" value="P-loop_NTPase"/>
</dbReference>
<dbReference type="NCBIfam" id="NF002981">
    <property type="entry name" value="PRK03695.1"/>
    <property type="match status" value="1"/>
</dbReference>
<dbReference type="PANTHER" id="PTHR42734">
    <property type="entry name" value="METAL TRANSPORT SYSTEM ATP-BINDING PROTEIN TM_0124-RELATED"/>
    <property type="match status" value="1"/>
</dbReference>
<dbReference type="PANTHER" id="PTHR42734:SF18">
    <property type="entry name" value="VITAMIN B12 IMPORT ATP-BINDING PROTEIN BTUD"/>
    <property type="match status" value="1"/>
</dbReference>
<dbReference type="Pfam" id="PF00005">
    <property type="entry name" value="ABC_tran"/>
    <property type="match status" value="1"/>
</dbReference>
<dbReference type="SMART" id="SM00382">
    <property type="entry name" value="AAA"/>
    <property type="match status" value="1"/>
</dbReference>
<dbReference type="SUPFAM" id="SSF52540">
    <property type="entry name" value="P-loop containing nucleoside triphosphate hydrolases"/>
    <property type="match status" value="1"/>
</dbReference>
<dbReference type="PROSITE" id="PS00211">
    <property type="entry name" value="ABC_TRANSPORTER_1"/>
    <property type="match status" value="1"/>
</dbReference>
<dbReference type="PROSITE" id="PS50893">
    <property type="entry name" value="ABC_TRANSPORTER_2"/>
    <property type="match status" value="1"/>
</dbReference>
<reference key="1">
    <citation type="journal article" date="2002" name="Proc. Natl. Acad. Sci. U.S.A.">
        <title>Extensive mosaic structure revealed by the complete genome sequence of uropathogenic Escherichia coli.</title>
        <authorList>
            <person name="Welch R.A."/>
            <person name="Burland V."/>
            <person name="Plunkett G. III"/>
            <person name="Redford P."/>
            <person name="Roesch P."/>
            <person name="Rasko D."/>
            <person name="Buckles E.L."/>
            <person name="Liou S.-R."/>
            <person name="Boutin A."/>
            <person name="Hackett J."/>
            <person name="Stroud D."/>
            <person name="Mayhew G.F."/>
            <person name="Rose D.J."/>
            <person name="Zhou S."/>
            <person name="Schwartz D.C."/>
            <person name="Perna N.T."/>
            <person name="Mobley H.L.T."/>
            <person name="Donnenberg M.S."/>
            <person name="Blattner F.R."/>
        </authorList>
    </citation>
    <scope>NUCLEOTIDE SEQUENCE [LARGE SCALE GENOMIC DNA]</scope>
    <source>
        <strain>CFT073 / ATCC 700928 / UPEC</strain>
    </source>
</reference>
<sequence length="249" mass="27085">MSIVMQLQDVAESTRLGPLSGEVRAGEILHLVGPNGAGKSTLLARMAGMTSGKGSIQFAGQPLEAWSATKLALHRAYLSQQQTPPFAMPVWHYLTLHQHDKTRTELLNDVAGALALDDKLGRSTNQLSGGEWQRVRLAAVVLQITPQANPAGQLLLLDEPMNSLDVAQQSALDKILSALCQQGLAIVMSSHDLNHTLRHAHRAWLLKGGKMLASGRREEVLTPANLAQAYGMNFRRLDIEGHRMLISTI</sequence>
<feature type="chain" id="PRO_0000091951" description="Vitamin B12 import ATP-binding protein BtuD">
    <location>
        <begin position="1"/>
        <end position="249"/>
    </location>
</feature>
<feature type="domain" description="ABC transporter" evidence="1">
    <location>
        <begin position="1"/>
        <end position="233"/>
    </location>
</feature>
<feature type="binding site" evidence="1">
    <location>
        <begin position="33"/>
        <end position="40"/>
    </location>
    <ligand>
        <name>ATP</name>
        <dbReference type="ChEBI" id="CHEBI:30616"/>
    </ligand>
</feature>
<protein>
    <recommendedName>
        <fullName evidence="1">Vitamin B12 import ATP-binding protein BtuD</fullName>
        <ecNumber evidence="1">7.6.2.8</ecNumber>
    </recommendedName>
    <alternativeName>
        <fullName evidence="1">Vitamin B12-transporting ATPase</fullName>
    </alternativeName>
</protein>
<organism>
    <name type="scientific">Escherichia coli O6:H1 (strain CFT073 / ATCC 700928 / UPEC)</name>
    <dbReference type="NCBI Taxonomy" id="199310"/>
    <lineage>
        <taxon>Bacteria</taxon>
        <taxon>Pseudomonadati</taxon>
        <taxon>Pseudomonadota</taxon>
        <taxon>Gammaproteobacteria</taxon>
        <taxon>Enterobacterales</taxon>
        <taxon>Enterobacteriaceae</taxon>
        <taxon>Escherichia</taxon>
    </lineage>
</organism>